<dbReference type="EMBL" id="AP008934">
    <property type="protein sequence ID" value="BAE18546.1"/>
    <property type="molecule type" value="Genomic_DNA"/>
</dbReference>
<dbReference type="RefSeq" id="WP_011303175.1">
    <property type="nucleotide sequence ID" value="NZ_MTGA01000038.1"/>
</dbReference>
<dbReference type="SMR" id="Q49XF1"/>
<dbReference type="KEGG" id="ssp:SSP1401"/>
<dbReference type="eggNOG" id="COG3711">
    <property type="taxonomic scope" value="Bacteria"/>
</dbReference>
<dbReference type="HOGENOM" id="CLU_078802_0_0_9"/>
<dbReference type="OrthoDB" id="9813552at2"/>
<dbReference type="Proteomes" id="UP000006371">
    <property type="component" value="Chromosome"/>
</dbReference>
<dbReference type="GO" id="GO:0003723">
    <property type="term" value="F:RNA binding"/>
    <property type="evidence" value="ECO:0007669"/>
    <property type="project" value="InterPro"/>
</dbReference>
<dbReference type="GO" id="GO:0045893">
    <property type="term" value="P:positive regulation of DNA-templated transcription"/>
    <property type="evidence" value="ECO:0007669"/>
    <property type="project" value="InterPro"/>
</dbReference>
<dbReference type="Gene3D" id="1.20.58.1950">
    <property type="match status" value="1"/>
</dbReference>
<dbReference type="Gene3D" id="1.20.890.100">
    <property type="match status" value="1"/>
</dbReference>
<dbReference type="Gene3D" id="2.30.24.10">
    <property type="entry name" value="CAT RNA-binding domain"/>
    <property type="match status" value="1"/>
</dbReference>
<dbReference type="Gene3D" id="1.10.1790.10">
    <property type="entry name" value="PRD domain"/>
    <property type="match status" value="1"/>
</dbReference>
<dbReference type="InterPro" id="IPR050661">
    <property type="entry name" value="BglG_antiterminators"/>
</dbReference>
<dbReference type="InterPro" id="IPR004341">
    <property type="entry name" value="CAT_RNA-bd_dom"/>
</dbReference>
<dbReference type="InterPro" id="IPR036650">
    <property type="entry name" value="CAT_RNA-bd_dom_sf"/>
</dbReference>
<dbReference type="InterPro" id="IPR011608">
    <property type="entry name" value="PRD"/>
</dbReference>
<dbReference type="InterPro" id="IPR036634">
    <property type="entry name" value="PRD_sf"/>
</dbReference>
<dbReference type="InterPro" id="IPR001550">
    <property type="entry name" value="Transcrpt_antitermin_CS"/>
</dbReference>
<dbReference type="NCBIfam" id="NF047357">
    <property type="entry name" value="antiterm_GlcT"/>
    <property type="match status" value="1"/>
</dbReference>
<dbReference type="PANTHER" id="PTHR30185">
    <property type="entry name" value="CRYPTIC BETA-GLUCOSIDE BGL OPERON ANTITERMINATOR"/>
    <property type="match status" value="1"/>
</dbReference>
<dbReference type="PANTHER" id="PTHR30185:SF16">
    <property type="entry name" value="PROTEIN GLCT"/>
    <property type="match status" value="1"/>
</dbReference>
<dbReference type="Pfam" id="PF03123">
    <property type="entry name" value="CAT_RBD"/>
    <property type="match status" value="1"/>
</dbReference>
<dbReference type="Pfam" id="PF00874">
    <property type="entry name" value="PRD"/>
    <property type="match status" value="2"/>
</dbReference>
<dbReference type="SMART" id="SM01061">
    <property type="entry name" value="CAT_RBD"/>
    <property type="match status" value="1"/>
</dbReference>
<dbReference type="SUPFAM" id="SSF63520">
    <property type="entry name" value="PTS-regulatory domain, PRD"/>
    <property type="match status" value="2"/>
</dbReference>
<dbReference type="SUPFAM" id="SSF50151">
    <property type="entry name" value="SacY-like RNA-binding domain"/>
    <property type="match status" value="1"/>
</dbReference>
<dbReference type="PROSITE" id="PS00654">
    <property type="entry name" value="PRD_1"/>
    <property type="match status" value="1"/>
</dbReference>
<dbReference type="PROSITE" id="PS51372">
    <property type="entry name" value="PRD_2"/>
    <property type="match status" value="2"/>
</dbReference>
<accession>Q49XF1</accession>
<gene>
    <name type="primary">glcT</name>
    <name type="ordered locus">SSP1401</name>
</gene>
<organism>
    <name type="scientific">Staphylococcus saprophyticus subsp. saprophyticus (strain ATCC 15305 / DSM 20229 / NCIMB 8711 / NCTC 7292 / S-41)</name>
    <dbReference type="NCBI Taxonomy" id="342451"/>
    <lineage>
        <taxon>Bacteria</taxon>
        <taxon>Bacillati</taxon>
        <taxon>Bacillota</taxon>
        <taxon>Bacilli</taxon>
        <taxon>Bacillales</taxon>
        <taxon>Staphylococcaceae</taxon>
        <taxon>Staphylococcus</taxon>
    </lineage>
</organism>
<comment type="similarity">
    <text evidence="2">Belongs to the transcriptional antiterminator BglG family. GlcT subfamily.</text>
</comment>
<evidence type="ECO:0000255" key="1">
    <source>
        <dbReference type="PROSITE-ProRule" id="PRU00704"/>
    </source>
</evidence>
<evidence type="ECO:0000305" key="2"/>
<reference key="1">
    <citation type="journal article" date="2005" name="Proc. Natl. Acad. Sci. U.S.A.">
        <title>Whole genome sequence of Staphylococcus saprophyticus reveals the pathogenesis of uncomplicated urinary tract infection.</title>
        <authorList>
            <person name="Kuroda M."/>
            <person name="Yamashita A."/>
            <person name="Hirakawa H."/>
            <person name="Kumano M."/>
            <person name="Morikawa K."/>
            <person name="Higashide M."/>
            <person name="Maruyama A."/>
            <person name="Inose Y."/>
            <person name="Matoba K."/>
            <person name="Toh H."/>
            <person name="Kuhara S."/>
            <person name="Hattori M."/>
            <person name="Ohta T."/>
        </authorList>
    </citation>
    <scope>NUCLEOTIDE SEQUENCE [LARGE SCALE GENOMIC DNA]</scope>
    <source>
        <strain>ATCC 15305 / DSM 20229 / NCIMB 8711 / NCTC 7292 / S-41</strain>
    </source>
</reference>
<feature type="chain" id="PRO_0000352618" description="Protein GlcT">
    <location>
        <begin position="1"/>
        <end position="281"/>
    </location>
</feature>
<feature type="domain" description="PRD 1" evidence="1">
    <location>
        <begin position="65"/>
        <end position="173"/>
    </location>
</feature>
<feature type="domain" description="PRD 2" evidence="1">
    <location>
        <begin position="174"/>
        <end position="281"/>
    </location>
</feature>
<name>GLCT_STAS1</name>
<sequence>MNDFLITKVLNNNVIICTKAQAEYVLIAKGIGFNKKSGMILQENQTIEKIYILDQKSQQDHYKTLMELANDTLIQAVIEAVNIITNSEMKVDNQKLVISLTDHIIFAYKRLKQNQLINNPFIVETKQLYSKEYKIAEKVIERLNHVLEVHFPEDEIGFIALHIASNTESLSMREMDLINELINKSVFILENDLKQTIDKDTIQYQRFIRHIQFLIKRLRNGESLKKTNAFEALLKEQYPLCFNIALKIMRLLQQELKIKVYEAEVIYLTLHVYHFMENHKS</sequence>
<proteinExistence type="inferred from homology"/>
<keyword id="KW-1185">Reference proteome</keyword>
<keyword id="KW-0677">Repeat</keyword>
<protein>
    <recommendedName>
        <fullName>Protein GlcT</fullName>
    </recommendedName>
</protein>